<evidence type="ECO:0000250" key="1">
    <source>
        <dbReference type="UniProtKB" id="P0C9B9"/>
    </source>
</evidence>
<evidence type="ECO:0000250" key="2">
    <source>
        <dbReference type="UniProtKB" id="Q00946"/>
    </source>
</evidence>
<evidence type="ECO:0000255" key="3"/>
<evidence type="ECO:0000305" key="4"/>
<gene>
    <name type="ordered locus">Pret-123</name>
</gene>
<keyword id="KW-1035">Host cytoplasm</keyword>
<keyword id="KW-0945">Host-virus interaction</keyword>
<keyword id="KW-0378">Hydrolase</keyword>
<keyword id="KW-1090">Inhibition of host innate immune response by virus</keyword>
<keyword id="KW-0426">Late protein</keyword>
<keyword id="KW-0645">Protease</keyword>
<keyword id="KW-0788">Thiol protease</keyword>
<keyword id="KW-0899">Viral immunoevasion</keyword>
<keyword id="KW-0946">Virion</keyword>
<reference key="1">
    <citation type="submission" date="2003-03" db="EMBL/GenBank/DDBJ databases">
        <title>African swine fever virus genomes.</title>
        <authorList>
            <person name="Kutish G.F."/>
            <person name="Rock D.L."/>
        </authorList>
    </citation>
    <scope>NUCLEOTIDE SEQUENCE [GENOMIC DNA]</scope>
</reference>
<feature type="chain" id="PRO_0000373127" description="SUMO-1 cysteine protease S273R">
    <location>
        <begin position="1"/>
        <end position="273"/>
    </location>
</feature>
<feature type="active site" evidence="2">
    <location>
        <position position="168"/>
    </location>
</feature>
<feature type="active site" evidence="1">
    <location>
        <position position="187"/>
    </location>
</feature>
<feature type="active site" description="Nucleophile" evidence="2">
    <location>
        <position position="232"/>
    </location>
</feature>
<feature type="binding site" evidence="3">
    <location>
        <position position="226"/>
    </location>
    <ligand>
        <name>substrate</name>
    </ligand>
</feature>
<accession>P0C9B7</accession>
<proteinExistence type="inferred from homology"/>
<comment type="function">
    <text evidence="2">Cysteine protease that plays several role during infection including processing of the structural polyprotein or inhibition of the host immune response. Catalyzes the maturation of the pp220 and pp62 polyprotein precursors into core-shell proteins. Plays a role in the disruption of host pyroptosis via specific cleavage of gasdermin D/GSDMD. In addition, strongly decreases the host cGAS-STING signaling by targeting IKBKE via its enzymatic activity. Also impairs host FOXJ1-mediated antiviral effect via degradation of FOXJ1.</text>
</comment>
<comment type="subcellular location">
    <subcellularLocation>
        <location evidence="2">Host cytoplasm</location>
    </subcellularLocation>
    <subcellularLocation>
        <location evidence="2">Virion</location>
    </subcellularLocation>
    <text evidence="2">Found in the perinuclear cytoplasmic viral factories during assembly.</text>
</comment>
<comment type="induction">
    <text evidence="2">Expressed late after infection.</text>
</comment>
<comment type="similarity">
    <text evidence="4">Belongs to the peptidase C63 family.</text>
</comment>
<protein>
    <recommendedName>
        <fullName evidence="1">SUMO-1 cysteine protease S273R</fullName>
        <shortName>pS273R</shortName>
        <ecNumber>3.4.22.-</ecNumber>
    </recommendedName>
</protein>
<sequence length="273" mass="31533">MSILEKITSSPSECAEHLTNKDSCLSKKIQKELTSFLQKKETLGCDSESCVITHPAVKAYAQQKGLDLSKELETRFKAPGPRNNTGLLTNFNIDETLQRWAIKYTKFFNCPFSMMDFERVHYKFNQVDMVKVYKGEELQYVEGKVVKRPCNTFGCVLNTDFSTGTGKHWVAIFVDMRGDCWSIEYFNSAGNAPPGPVIRWMERVKQQLLKIHHTVKTLAVTNIRHQRSQTECGPYSLFYIRARLDNVSYAHFISARITDEDMYKFRTHLFRIA</sequence>
<organismHost>
    <name type="scientific">Ornithodoros</name>
    <name type="common">relapsing fever ticks</name>
    <dbReference type="NCBI Taxonomy" id="6937"/>
</organismHost>
<organismHost>
    <name type="scientific">Phacochoerus aethiopicus</name>
    <name type="common">Warthog</name>
    <dbReference type="NCBI Taxonomy" id="85517"/>
</organismHost>
<organismHost>
    <name type="scientific">Phacochoerus africanus</name>
    <name type="common">Warthog</name>
    <dbReference type="NCBI Taxonomy" id="41426"/>
</organismHost>
<organismHost>
    <name type="scientific">Potamochoerus larvatus</name>
    <name type="common">Bushpig</name>
    <dbReference type="NCBI Taxonomy" id="273792"/>
</organismHost>
<organismHost>
    <name type="scientific">Sus scrofa</name>
    <name type="common">Pig</name>
    <dbReference type="NCBI Taxonomy" id="9823"/>
</organismHost>
<name>VPRT_ASFP4</name>
<organism>
    <name type="scientific">African swine fever virus (isolate Tick/South Africa/Pretoriuskop Pr4/1996)</name>
    <name type="common">ASFV</name>
    <dbReference type="NCBI Taxonomy" id="561443"/>
    <lineage>
        <taxon>Viruses</taxon>
        <taxon>Varidnaviria</taxon>
        <taxon>Bamfordvirae</taxon>
        <taxon>Nucleocytoviricota</taxon>
        <taxon>Pokkesviricetes</taxon>
        <taxon>Asfuvirales</taxon>
        <taxon>Asfarviridae</taxon>
        <taxon>Asfivirus</taxon>
        <taxon>African swine fever virus</taxon>
    </lineage>
</organism>
<dbReference type="EC" id="3.4.22.-"/>
<dbReference type="EMBL" id="AY261363">
    <property type="status" value="NOT_ANNOTATED_CDS"/>
    <property type="molecule type" value="Genomic_DNA"/>
</dbReference>
<dbReference type="SMR" id="P0C9B7"/>
<dbReference type="Proteomes" id="UP000000859">
    <property type="component" value="Segment"/>
</dbReference>
<dbReference type="GO" id="GO:0030430">
    <property type="term" value="C:host cell cytoplasm"/>
    <property type="evidence" value="ECO:0007669"/>
    <property type="project" value="UniProtKB-SubCell"/>
</dbReference>
<dbReference type="GO" id="GO:0044423">
    <property type="term" value="C:virion component"/>
    <property type="evidence" value="ECO:0007669"/>
    <property type="project" value="UniProtKB-KW"/>
</dbReference>
<dbReference type="GO" id="GO:0004197">
    <property type="term" value="F:cysteine-type endopeptidase activity"/>
    <property type="evidence" value="ECO:0007669"/>
    <property type="project" value="InterPro"/>
</dbReference>
<dbReference type="GO" id="GO:0006508">
    <property type="term" value="P:proteolysis"/>
    <property type="evidence" value="ECO:0007669"/>
    <property type="project" value="UniProtKB-KW"/>
</dbReference>
<dbReference type="GO" id="GO:0052170">
    <property type="term" value="P:symbiont-mediated suppression of host innate immune response"/>
    <property type="evidence" value="ECO:0007669"/>
    <property type="project" value="UniProtKB-KW"/>
</dbReference>
<dbReference type="GO" id="GO:0019082">
    <property type="term" value="P:viral protein processing"/>
    <property type="evidence" value="ECO:0007669"/>
    <property type="project" value="InterPro"/>
</dbReference>
<dbReference type="Gene3D" id="3.40.395.10">
    <property type="entry name" value="Adenoviral Proteinase, Chain A"/>
    <property type="match status" value="1"/>
</dbReference>
<dbReference type="InterPro" id="IPR038765">
    <property type="entry name" value="Papain-like_cys_pep_sf"/>
</dbReference>
<dbReference type="InterPro" id="IPR003653">
    <property type="entry name" value="Peptidase_C48_C"/>
</dbReference>
<dbReference type="InterPro" id="IPR016510">
    <property type="entry name" value="VPRT"/>
</dbReference>
<dbReference type="Pfam" id="PF02902">
    <property type="entry name" value="Peptidase_C48"/>
    <property type="match status" value="1"/>
</dbReference>
<dbReference type="PIRSF" id="PIRSF007159">
    <property type="entry name" value="Peptidase_ASVF"/>
    <property type="match status" value="1"/>
</dbReference>
<dbReference type="SUPFAM" id="SSF54001">
    <property type="entry name" value="Cysteine proteinases"/>
    <property type="match status" value="1"/>
</dbReference>